<accession>Q9LAK5</accession>
<reference key="1">
    <citation type="journal article" date="2001" name="Microbiology">
        <title>A Corynebacterium glutamicum mutant with a defined deletion within the rplK gene is impaired in (p)ppGpp accumulation upon amino acid starvation.</title>
        <authorList>
            <person name="Wehmeier L."/>
            <person name="Brockmann-Gretza O."/>
            <person name="Pisabarro A."/>
            <person name="Tauch A."/>
            <person name="Puhler A."/>
            <person name="Martin J.F."/>
            <person name="Kalinowski J."/>
        </authorList>
    </citation>
    <scope>NUCLEOTIDE SEQUENCE [GENOMIC DNA]</scope>
    <source>
        <strain>ATCC 13032 / DSM 20300 / JCM 1318 / BCRC 11384 / CCUG 27702 / LMG 3730 / NBRC 12168 / NCIMB 10025 / NRRL B-2784 / 534</strain>
    </source>
</reference>
<reference key="2">
    <citation type="journal article" date="2001" name="Appl. Environ. Microbiol.">
        <title>Organization and transcriptional analysis of a six gene cluster around the rplK-prlA operon of Corynebacterium glutamicum encoding the ribosomal proteins L11 and L1.</title>
        <authorList>
            <person name="Barreiro C."/>
            <person name="Gonzalez-Lavado E."/>
            <person name="Martin J.F."/>
        </authorList>
    </citation>
    <scope>NUCLEOTIDE SEQUENCE [GENOMIC DNA]</scope>
    <source>
        <strain>ATCC 13032 / DSM 20300 / JCM 1318 / BCRC 11384 / CCUG 27702 / LMG 3730 / NBRC 12168 / NCIMB 10025 / NRRL B-2784 / 534</strain>
    </source>
</reference>
<reference key="3">
    <citation type="journal article" date="2003" name="Appl. Microbiol. Biotechnol.">
        <title>The Corynebacterium glutamicum genome: features and impacts on biotechnological processes.</title>
        <authorList>
            <person name="Ikeda M."/>
            <person name="Nakagawa S."/>
        </authorList>
    </citation>
    <scope>NUCLEOTIDE SEQUENCE [LARGE SCALE GENOMIC DNA]</scope>
    <source>
        <strain>ATCC 13032 / DSM 20300 / JCM 1318 / BCRC 11384 / CCUG 27702 / LMG 3730 / NBRC 12168 / NCIMB 10025 / NRRL B-2784 / 534</strain>
    </source>
</reference>
<reference key="4">
    <citation type="journal article" date="2003" name="J. Biotechnol.">
        <title>The complete Corynebacterium glutamicum ATCC 13032 genome sequence and its impact on the production of L-aspartate-derived amino acids and vitamins.</title>
        <authorList>
            <person name="Kalinowski J."/>
            <person name="Bathe B."/>
            <person name="Bartels D."/>
            <person name="Bischoff N."/>
            <person name="Bott M."/>
            <person name="Burkovski A."/>
            <person name="Dusch N."/>
            <person name="Eggeling L."/>
            <person name="Eikmanns B.J."/>
            <person name="Gaigalat L."/>
            <person name="Goesmann A."/>
            <person name="Hartmann M."/>
            <person name="Huthmacher K."/>
            <person name="Kraemer R."/>
            <person name="Linke B."/>
            <person name="McHardy A.C."/>
            <person name="Meyer F."/>
            <person name="Moeckel B."/>
            <person name="Pfefferle W."/>
            <person name="Puehler A."/>
            <person name="Rey D.A."/>
            <person name="Rueckert C."/>
            <person name="Rupp O."/>
            <person name="Sahm H."/>
            <person name="Wendisch V.F."/>
            <person name="Wiegraebe I."/>
            <person name="Tauch A."/>
        </authorList>
    </citation>
    <scope>NUCLEOTIDE SEQUENCE [LARGE SCALE GENOMIC DNA]</scope>
    <source>
        <strain>ATCC 13032 / DSM 20300 / JCM 1318 / BCRC 11384 / CCUG 27702 / LMG 3730 / NBRC 12168 / NCIMB 10025 / NRRL B-2784 / 534</strain>
    </source>
</reference>
<sequence>MSKNSKAYREAAEKIDAGRIYSPLEAANLVKETSSKNYDASIDVAIRLGVDPRKADQLVRGTVSLPNGTGKTVRVAVFAQGEKATEAEAAGADFVGTDELVEKIQGGWTDFDVAIATPDQMAKIGRIARVLGPRGLMPNPKTGTVTNDVAKAIEEVKGGKISFRVDKASNLHAAIGKASFDAKKLAENYGALLDEIIRIKPSSAKGIYVKRVTLSSTTGPGVEVDTHVTKNYAEEA</sequence>
<organism>
    <name type="scientific">Corynebacterium glutamicum (strain ATCC 13032 / DSM 20300 / JCM 1318 / BCRC 11384 / CCUG 27702 / LMG 3730 / NBRC 12168 / NCIMB 10025 / NRRL B-2784 / 534)</name>
    <dbReference type="NCBI Taxonomy" id="196627"/>
    <lineage>
        <taxon>Bacteria</taxon>
        <taxon>Bacillati</taxon>
        <taxon>Actinomycetota</taxon>
        <taxon>Actinomycetes</taxon>
        <taxon>Mycobacteriales</taxon>
        <taxon>Corynebacteriaceae</taxon>
        <taxon>Corynebacterium</taxon>
    </lineage>
</organism>
<name>RL1_CORGL</name>
<comment type="function">
    <text evidence="1">Binds directly to 23S rRNA. The L1 stalk is quite mobile in the ribosome, and is involved in E site tRNA release.</text>
</comment>
<comment type="function">
    <text evidence="1">Protein L1 is also a translational repressor protein, it controls the translation of the L11 operon by binding to its mRNA.</text>
</comment>
<comment type="subunit">
    <text evidence="1">Part of the 50S ribosomal subunit.</text>
</comment>
<comment type="similarity">
    <text evidence="1">Belongs to the universal ribosomal protein uL1 family.</text>
</comment>
<protein>
    <recommendedName>
        <fullName evidence="1">Large ribosomal subunit protein uL1</fullName>
    </recommendedName>
    <alternativeName>
        <fullName evidence="2">50S ribosomal protein L1</fullName>
    </alternativeName>
</protein>
<dbReference type="EMBL" id="AF130462">
    <property type="protein sequence ID" value="AAF36508.1"/>
    <property type="molecule type" value="Genomic_DNA"/>
</dbReference>
<dbReference type="EMBL" id="AJ300822">
    <property type="protein sequence ID" value="CAC38385.1"/>
    <property type="molecule type" value="Genomic_DNA"/>
</dbReference>
<dbReference type="EMBL" id="BA000036">
    <property type="protein sequence ID" value="BAB97870.1"/>
    <property type="molecule type" value="Genomic_DNA"/>
</dbReference>
<dbReference type="EMBL" id="BX927149">
    <property type="protein sequence ID" value="CAF19191.1"/>
    <property type="molecule type" value="Genomic_DNA"/>
</dbReference>
<dbReference type="RefSeq" id="NP_599722.1">
    <property type="nucleotide sequence ID" value="NC_003450.3"/>
</dbReference>
<dbReference type="RefSeq" id="WP_011013680.1">
    <property type="nucleotide sequence ID" value="NC_006958.1"/>
</dbReference>
<dbReference type="SMR" id="Q9LAK5"/>
<dbReference type="STRING" id="196627.cg0564"/>
<dbReference type="GeneID" id="1021483"/>
<dbReference type="KEGG" id="cgb:cg0564"/>
<dbReference type="KEGG" id="cgl:Cgl0477"/>
<dbReference type="PATRIC" id="fig|196627.13.peg.475"/>
<dbReference type="eggNOG" id="COG0081">
    <property type="taxonomic scope" value="Bacteria"/>
</dbReference>
<dbReference type="HOGENOM" id="CLU_062853_0_0_11"/>
<dbReference type="OrthoDB" id="9803740at2"/>
<dbReference type="BioCyc" id="CORYNE:G18NG-10039-MONOMER"/>
<dbReference type="Proteomes" id="UP000000582">
    <property type="component" value="Chromosome"/>
</dbReference>
<dbReference type="Proteomes" id="UP000001009">
    <property type="component" value="Chromosome"/>
</dbReference>
<dbReference type="GO" id="GO:0015934">
    <property type="term" value="C:large ribosomal subunit"/>
    <property type="evidence" value="ECO:0007669"/>
    <property type="project" value="InterPro"/>
</dbReference>
<dbReference type="GO" id="GO:0019843">
    <property type="term" value="F:rRNA binding"/>
    <property type="evidence" value="ECO:0007669"/>
    <property type="project" value="UniProtKB-UniRule"/>
</dbReference>
<dbReference type="GO" id="GO:0003735">
    <property type="term" value="F:structural constituent of ribosome"/>
    <property type="evidence" value="ECO:0007669"/>
    <property type="project" value="InterPro"/>
</dbReference>
<dbReference type="GO" id="GO:0000049">
    <property type="term" value="F:tRNA binding"/>
    <property type="evidence" value="ECO:0007669"/>
    <property type="project" value="UniProtKB-KW"/>
</dbReference>
<dbReference type="GO" id="GO:0006417">
    <property type="term" value="P:regulation of translation"/>
    <property type="evidence" value="ECO:0007669"/>
    <property type="project" value="UniProtKB-KW"/>
</dbReference>
<dbReference type="GO" id="GO:0006412">
    <property type="term" value="P:translation"/>
    <property type="evidence" value="ECO:0007669"/>
    <property type="project" value="UniProtKB-UniRule"/>
</dbReference>
<dbReference type="CDD" id="cd00403">
    <property type="entry name" value="Ribosomal_L1"/>
    <property type="match status" value="1"/>
</dbReference>
<dbReference type="FunFam" id="3.40.50.790:FF:000001">
    <property type="entry name" value="50S ribosomal protein L1"/>
    <property type="match status" value="1"/>
</dbReference>
<dbReference type="Gene3D" id="3.30.190.20">
    <property type="match status" value="1"/>
</dbReference>
<dbReference type="Gene3D" id="3.40.50.790">
    <property type="match status" value="1"/>
</dbReference>
<dbReference type="HAMAP" id="MF_01318_B">
    <property type="entry name" value="Ribosomal_uL1_B"/>
    <property type="match status" value="1"/>
</dbReference>
<dbReference type="InterPro" id="IPR005878">
    <property type="entry name" value="Ribosom_uL1_bac-type"/>
</dbReference>
<dbReference type="InterPro" id="IPR002143">
    <property type="entry name" value="Ribosomal_uL1"/>
</dbReference>
<dbReference type="InterPro" id="IPR023674">
    <property type="entry name" value="Ribosomal_uL1-like"/>
</dbReference>
<dbReference type="InterPro" id="IPR028364">
    <property type="entry name" value="Ribosomal_uL1/biogenesis"/>
</dbReference>
<dbReference type="InterPro" id="IPR016095">
    <property type="entry name" value="Ribosomal_uL1_3-a/b-sand"/>
</dbReference>
<dbReference type="InterPro" id="IPR023673">
    <property type="entry name" value="Ribosomal_uL1_CS"/>
</dbReference>
<dbReference type="NCBIfam" id="TIGR01169">
    <property type="entry name" value="rplA_bact"/>
    <property type="match status" value="1"/>
</dbReference>
<dbReference type="PANTHER" id="PTHR36427">
    <property type="entry name" value="54S RIBOSOMAL PROTEIN L1, MITOCHONDRIAL"/>
    <property type="match status" value="1"/>
</dbReference>
<dbReference type="PANTHER" id="PTHR36427:SF3">
    <property type="entry name" value="LARGE RIBOSOMAL SUBUNIT PROTEIN UL1M"/>
    <property type="match status" value="1"/>
</dbReference>
<dbReference type="Pfam" id="PF00687">
    <property type="entry name" value="Ribosomal_L1"/>
    <property type="match status" value="1"/>
</dbReference>
<dbReference type="PIRSF" id="PIRSF002155">
    <property type="entry name" value="Ribosomal_L1"/>
    <property type="match status" value="1"/>
</dbReference>
<dbReference type="SUPFAM" id="SSF56808">
    <property type="entry name" value="Ribosomal protein L1"/>
    <property type="match status" value="1"/>
</dbReference>
<dbReference type="PROSITE" id="PS01199">
    <property type="entry name" value="RIBOSOMAL_L1"/>
    <property type="match status" value="1"/>
</dbReference>
<evidence type="ECO:0000255" key="1">
    <source>
        <dbReference type="HAMAP-Rule" id="MF_01318"/>
    </source>
</evidence>
<evidence type="ECO:0000305" key="2"/>
<proteinExistence type="inferred from homology"/>
<gene>
    <name evidence="1" type="primary">rplA</name>
    <name type="ordered locus">Cgl0477</name>
    <name type="ordered locus">cg0564</name>
</gene>
<feature type="chain" id="PRO_0000125649" description="Large ribosomal subunit protein uL1">
    <location>
        <begin position="1"/>
        <end position="236"/>
    </location>
</feature>
<keyword id="KW-1185">Reference proteome</keyword>
<keyword id="KW-0678">Repressor</keyword>
<keyword id="KW-0687">Ribonucleoprotein</keyword>
<keyword id="KW-0689">Ribosomal protein</keyword>
<keyword id="KW-0694">RNA-binding</keyword>
<keyword id="KW-0699">rRNA-binding</keyword>
<keyword id="KW-0810">Translation regulation</keyword>
<keyword id="KW-0820">tRNA-binding</keyword>